<proteinExistence type="evidence at protein level"/>
<sequence>MGVTKTPLYETLNESSAVALAVKLGLFPSKSTLTCQEIGDGNLNYVFHIYDQEHDRALIIKQAVPYAKVVGESWPLTIDRARIESSALIRQGEHVPHLVPRVFYSDTEMAVTVMEDLSHLKIARKGLIEGENYPHLSQHIGEFLGKTLFYSSDYALEPKVKKQLVKQFTNPELCDITERLVFTDPFFDHDTNDFEEELRPFVEKLWNNDSVKIEAAKLKKSFLTSAETLIHGDLHTGSIFASEHETKVIDPEFAFYGPIGFDVGQFIANLFLNALSRDGADREPLYEHVNQVWETFEETFSEAWQKDSLDVYANIDGYLTDTLSHIFEEAIGFAGCELIRRTIGLAHVADLDTIVPFDKRIGRKRLALETGTAFIEKRSEFKTITDVIELFKLLVKE</sequence>
<protein>
    <recommendedName>
        <fullName evidence="4">Methylthioribose kinase</fullName>
        <shortName evidence="4">MTR kinase</shortName>
        <ecNumber evidence="1">2.7.1.100</ecNumber>
    </recommendedName>
</protein>
<keyword id="KW-0002">3D-structure</keyword>
<keyword id="KW-0028">Amino-acid biosynthesis</keyword>
<keyword id="KW-0067">ATP-binding</keyword>
<keyword id="KW-0418">Kinase</keyword>
<keyword id="KW-0486">Methionine biosynthesis</keyword>
<keyword id="KW-0547">Nucleotide-binding</keyword>
<keyword id="KW-1185">Reference proteome</keyword>
<keyword id="KW-0346">Stress response</keyword>
<keyword id="KW-0808">Transferase</keyword>
<gene>
    <name type="primary">mtnK</name>
    <name type="synonym">ykrT</name>
    <name type="ordered locus">BSU13560</name>
</gene>
<name>MTNK_BACSU</name>
<comment type="function">
    <text evidence="1">Catalyzes the phosphorylation of methylthioribose into methylthioribose-1-phosphate.</text>
</comment>
<comment type="catalytic activity">
    <reaction evidence="1">
        <text>5-(methylsulfanyl)-D-ribose + ATP = 5-(methylsulfanyl)-alpha-D-ribose 1-phosphate + ADP + H(+)</text>
        <dbReference type="Rhea" id="RHEA:22312"/>
        <dbReference type="ChEBI" id="CHEBI:15378"/>
        <dbReference type="ChEBI" id="CHEBI:30616"/>
        <dbReference type="ChEBI" id="CHEBI:58533"/>
        <dbReference type="ChEBI" id="CHEBI:78440"/>
        <dbReference type="ChEBI" id="CHEBI:456216"/>
        <dbReference type="EC" id="2.7.1.100"/>
    </reaction>
</comment>
<comment type="pathway">
    <text evidence="6">Amino-acid biosynthesis; L-methionine biosynthesis via salvage pathway; S-methyl-5-thio-alpha-D-ribose 1-phosphate from S-methyl-5'-thioadenosine (hydrolase route): step 2/2.</text>
</comment>
<comment type="subunit">
    <text evidence="2 3">Homodimer.</text>
</comment>
<comment type="induction">
    <text evidence="1">By starvation.</text>
</comment>
<comment type="similarity">
    <text evidence="5">Belongs to the methylthioribose kinase family.</text>
</comment>
<reference key="1">
    <citation type="journal article" date="1997" name="Nature">
        <title>The complete genome sequence of the Gram-positive bacterium Bacillus subtilis.</title>
        <authorList>
            <person name="Kunst F."/>
            <person name="Ogasawara N."/>
            <person name="Moszer I."/>
            <person name="Albertini A.M."/>
            <person name="Alloni G."/>
            <person name="Azevedo V."/>
            <person name="Bertero M.G."/>
            <person name="Bessieres P."/>
            <person name="Bolotin A."/>
            <person name="Borchert S."/>
            <person name="Borriss R."/>
            <person name="Boursier L."/>
            <person name="Brans A."/>
            <person name="Braun M."/>
            <person name="Brignell S.C."/>
            <person name="Bron S."/>
            <person name="Brouillet S."/>
            <person name="Bruschi C.V."/>
            <person name="Caldwell B."/>
            <person name="Capuano V."/>
            <person name="Carter N.M."/>
            <person name="Choi S.-K."/>
            <person name="Codani J.-J."/>
            <person name="Connerton I.F."/>
            <person name="Cummings N.J."/>
            <person name="Daniel R.A."/>
            <person name="Denizot F."/>
            <person name="Devine K.M."/>
            <person name="Duesterhoeft A."/>
            <person name="Ehrlich S.D."/>
            <person name="Emmerson P.T."/>
            <person name="Entian K.-D."/>
            <person name="Errington J."/>
            <person name="Fabret C."/>
            <person name="Ferrari E."/>
            <person name="Foulger D."/>
            <person name="Fritz C."/>
            <person name="Fujita M."/>
            <person name="Fujita Y."/>
            <person name="Fuma S."/>
            <person name="Galizzi A."/>
            <person name="Galleron N."/>
            <person name="Ghim S.-Y."/>
            <person name="Glaser P."/>
            <person name="Goffeau A."/>
            <person name="Golightly E.J."/>
            <person name="Grandi G."/>
            <person name="Guiseppi G."/>
            <person name="Guy B.J."/>
            <person name="Haga K."/>
            <person name="Haiech J."/>
            <person name="Harwood C.R."/>
            <person name="Henaut A."/>
            <person name="Hilbert H."/>
            <person name="Holsappel S."/>
            <person name="Hosono S."/>
            <person name="Hullo M.-F."/>
            <person name="Itaya M."/>
            <person name="Jones L.-M."/>
            <person name="Joris B."/>
            <person name="Karamata D."/>
            <person name="Kasahara Y."/>
            <person name="Klaerr-Blanchard M."/>
            <person name="Klein C."/>
            <person name="Kobayashi Y."/>
            <person name="Koetter P."/>
            <person name="Koningstein G."/>
            <person name="Krogh S."/>
            <person name="Kumano M."/>
            <person name="Kurita K."/>
            <person name="Lapidus A."/>
            <person name="Lardinois S."/>
            <person name="Lauber J."/>
            <person name="Lazarevic V."/>
            <person name="Lee S.-M."/>
            <person name="Levine A."/>
            <person name="Liu H."/>
            <person name="Masuda S."/>
            <person name="Mauel C."/>
            <person name="Medigue C."/>
            <person name="Medina N."/>
            <person name="Mellado R.P."/>
            <person name="Mizuno M."/>
            <person name="Moestl D."/>
            <person name="Nakai S."/>
            <person name="Noback M."/>
            <person name="Noone D."/>
            <person name="O'Reilly M."/>
            <person name="Ogawa K."/>
            <person name="Ogiwara A."/>
            <person name="Oudega B."/>
            <person name="Park S.-H."/>
            <person name="Parro V."/>
            <person name="Pohl T.M."/>
            <person name="Portetelle D."/>
            <person name="Porwollik S."/>
            <person name="Prescott A.M."/>
            <person name="Presecan E."/>
            <person name="Pujic P."/>
            <person name="Purnelle B."/>
            <person name="Rapoport G."/>
            <person name="Rey M."/>
            <person name="Reynolds S."/>
            <person name="Rieger M."/>
            <person name="Rivolta C."/>
            <person name="Rocha E."/>
            <person name="Roche B."/>
            <person name="Rose M."/>
            <person name="Sadaie Y."/>
            <person name="Sato T."/>
            <person name="Scanlan E."/>
            <person name="Schleich S."/>
            <person name="Schroeter R."/>
            <person name="Scoffone F."/>
            <person name="Sekiguchi J."/>
            <person name="Sekowska A."/>
            <person name="Seror S.J."/>
            <person name="Serror P."/>
            <person name="Shin B.-S."/>
            <person name="Soldo B."/>
            <person name="Sorokin A."/>
            <person name="Tacconi E."/>
            <person name="Takagi T."/>
            <person name="Takahashi H."/>
            <person name="Takemaru K."/>
            <person name="Takeuchi M."/>
            <person name="Tamakoshi A."/>
            <person name="Tanaka T."/>
            <person name="Terpstra P."/>
            <person name="Tognoni A."/>
            <person name="Tosato V."/>
            <person name="Uchiyama S."/>
            <person name="Vandenbol M."/>
            <person name="Vannier F."/>
            <person name="Vassarotti A."/>
            <person name="Viari A."/>
            <person name="Wambutt R."/>
            <person name="Wedler E."/>
            <person name="Wedler H."/>
            <person name="Weitzenegger T."/>
            <person name="Winters P."/>
            <person name="Wipat A."/>
            <person name="Yamamoto H."/>
            <person name="Yamane K."/>
            <person name="Yasumoto K."/>
            <person name="Yata K."/>
            <person name="Yoshida K."/>
            <person name="Yoshikawa H.-F."/>
            <person name="Zumstein E."/>
            <person name="Yoshikawa H."/>
            <person name="Danchin A."/>
        </authorList>
    </citation>
    <scope>NUCLEOTIDE SEQUENCE [LARGE SCALE GENOMIC DNA]</scope>
    <source>
        <strain>168</strain>
    </source>
</reference>
<reference key="2">
    <citation type="journal article" date="2001" name="BMC Microbiol.">
        <title>MtnK, methylthioribose kinase, is a starvation-induced protein in Bacillus subtilis.</title>
        <authorList>
            <person name="Sekowska A."/>
            <person name="Mulard L."/>
            <person name="Krogh S."/>
            <person name="Tse J.K.S."/>
            <person name="Danchin A."/>
        </authorList>
    </citation>
    <scope>FUNCTION</scope>
    <scope>CATALYTIC ACTIVITY</scope>
    <scope>INDUCTION</scope>
    <scope>REANALYSIS OF N-TERMINUS</scope>
</reference>
<reference key="3">
    <citation type="journal article" date="2002" name="BMC Microbiol.">
        <title>The methionine salvage pathway in Bacillus subtilis.</title>
        <authorList>
            <person name="Sekowska A."/>
            <person name="Danchin A."/>
        </authorList>
    </citation>
    <scope>REVIEW</scope>
</reference>
<reference key="4">
    <citation type="journal article" date="2007" name="Acta Crystallogr. D">
        <title>ADP-2Ho as a phasing tool for nucleotide-containing proteins.</title>
        <authorList>
            <person name="Ku S.-Y."/>
            <person name="Smith G.D."/>
            <person name="Howell P.L."/>
        </authorList>
    </citation>
    <scope>X-RAY CRYSTALLOGRAPHY (2.0 ANGSTROMS) IN COMPLEX WITH ADP-2HO</scope>
    <scope>SUBUNIT</scope>
</reference>
<reference key="5">
    <citation type="journal article" date="2007" name="J. Biol. Chem.">
        <title>Structures of 5-methylthioribose kinase reveal substrate specificity and unusual mode of nucleotide binding.</title>
        <authorList>
            <person name="Ku S.Y."/>
            <person name="Yip P."/>
            <person name="Cornell K.A."/>
            <person name="Riscoe M.K."/>
            <person name="Behr J.B."/>
            <person name="Guillerm G."/>
            <person name="Howell P.L."/>
        </authorList>
    </citation>
    <scope>X-RAY CRYSTALLOGRAPHY (2.2 ANGSTROMS) IN COMPLEX WITH ADENOSYL NUCLEOTIDES AND SUBSTRATE ANALOGS</scope>
    <scope>SUBUNIT</scope>
</reference>
<dbReference type="EC" id="2.7.1.100" evidence="1"/>
<dbReference type="EMBL" id="AL009126">
    <property type="protein sequence ID" value="CAB13229.2"/>
    <property type="molecule type" value="Genomic_DNA"/>
</dbReference>
<dbReference type="PIR" id="D69863">
    <property type="entry name" value="D69863"/>
</dbReference>
<dbReference type="RefSeq" id="NP_389239.2">
    <property type="nucleotide sequence ID" value="NC_000964.3"/>
</dbReference>
<dbReference type="RefSeq" id="WP_003244973.1">
    <property type="nucleotide sequence ID" value="NZ_OZ025638.1"/>
</dbReference>
<dbReference type="PDB" id="2OLC">
    <property type="method" value="X-ray"/>
    <property type="resolution" value="2.00 A"/>
    <property type="chains" value="A/B=1-397"/>
</dbReference>
<dbReference type="PDB" id="2PU8">
    <property type="method" value="X-ray"/>
    <property type="resolution" value="2.10 A"/>
    <property type="chains" value="A/B=1-397"/>
</dbReference>
<dbReference type="PDB" id="2PUI">
    <property type="method" value="X-ray"/>
    <property type="resolution" value="2.20 A"/>
    <property type="chains" value="A/B=1-397"/>
</dbReference>
<dbReference type="PDB" id="2PUL">
    <property type="method" value="X-ray"/>
    <property type="resolution" value="2.00 A"/>
    <property type="chains" value="A/B=1-397"/>
</dbReference>
<dbReference type="PDB" id="2PUN">
    <property type="method" value="X-ray"/>
    <property type="resolution" value="2.30 A"/>
    <property type="chains" value="A/B=1-397"/>
</dbReference>
<dbReference type="PDB" id="2PUP">
    <property type="method" value="X-ray"/>
    <property type="resolution" value="2.60 A"/>
    <property type="chains" value="A/B=1-397"/>
</dbReference>
<dbReference type="PDBsum" id="2OLC"/>
<dbReference type="PDBsum" id="2PU8"/>
<dbReference type="PDBsum" id="2PUI"/>
<dbReference type="PDBsum" id="2PUL"/>
<dbReference type="PDBsum" id="2PUN"/>
<dbReference type="PDBsum" id="2PUP"/>
<dbReference type="SMR" id="O31663"/>
<dbReference type="FunCoup" id="O31663">
    <property type="interactions" value="114"/>
</dbReference>
<dbReference type="IntAct" id="O31663">
    <property type="interactions" value="1"/>
</dbReference>
<dbReference type="MINT" id="O31663"/>
<dbReference type="STRING" id="224308.BSU13560"/>
<dbReference type="PaxDb" id="224308-BSU13560"/>
<dbReference type="EnsemblBacteria" id="CAB13229">
    <property type="protein sequence ID" value="CAB13229"/>
    <property type="gene ID" value="BSU_13560"/>
</dbReference>
<dbReference type="GeneID" id="939336"/>
<dbReference type="KEGG" id="bsu:BSU13560"/>
<dbReference type="PATRIC" id="fig|224308.179.peg.1473"/>
<dbReference type="eggNOG" id="COG4857">
    <property type="taxonomic scope" value="Bacteria"/>
</dbReference>
<dbReference type="InParanoid" id="O31663"/>
<dbReference type="OrthoDB" id="9777791at2"/>
<dbReference type="BioCyc" id="BSUB:BSU13560-MONOMER"/>
<dbReference type="BRENDA" id="2.7.1.100">
    <property type="organism ID" value="658"/>
</dbReference>
<dbReference type="SABIO-RK" id="O31663"/>
<dbReference type="UniPathway" id="UPA00904">
    <property type="reaction ID" value="UER00872"/>
</dbReference>
<dbReference type="EvolutionaryTrace" id="O31663"/>
<dbReference type="Proteomes" id="UP000001570">
    <property type="component" value="Chromosome"/>
</dbReference>
<dbReference type="GO" id="GO:0005524">
    <property type="term" value="F:ATP binding"/>
    <property type="evidence" value="ECO:0007669"/>
    <property type="project" value="UniProtKB-UniRule"/>
</dbReference>
<dbReference type="GO" id="GO:0046522">
    <property type="term" value="F:S-methyl-5-thioribose kinase activity"/>
    <property type="evidence" value="ECO:0007669"/>
    <property type="project" value="UniProtKB-UniRule"/>
</dbReference>
<dbReference type="GO" id="GO:0019509">
    <property type="term" value="P:L-methionine salvage from methylthioadenosine"/>
    <property type="evidence" value="ECO:0007669"/>
    <property type="project" value="UniProtKB-UniRule"/>
</dbReference>
<dbReference type="Gene3D" id="3.90.1200.10">
    <property type="match status" value="1"/>
</dbReference>
<dbReference type="Gene3D" id="3.30.200.20">
    <property type="entry name" value="Phosphorylase Kinase, domain 1"/>
    <property type="match status" value="1"/>
</dbReference>
<dbReference type="HAMAP" id="MF_01683">
    <property type="entry name" value="Salvage_MtnK"/>
    <property type="match status" value="1"/>
</dbReference>
<dbReference type="InterPro" id="IPR002575">
    <property type="entry name" value="Aminoglycoside_PTrfase"/>
</dbReference>
<dbReference type="InterPro" id="IPR011009">
    <property type="entry name" value="Kinase-like_dom_sf"/>
</dbReference>
<dbReference type="InterPro" id="IPR009212">
    <property type="entry name" value="Methylthioribose_kinase"/>
</dbReference>
<dbReference type="NCBIfam" id="TIGR01767">
    <property type="entry name" value="MTRK"/>
    <property type="match status" value="1"/>
</dbReference>
<dbReference type="PANTHER" id="PTHR34273">
    <property type="entry name" value="METHYLTHIORIBOSE KINASE"/>
    <property type="match status" value="1"/>
</dbReference>
<dbReference type="PANTHER" id="PTHR34273:SF2">
    <property type="entry name" value="METHYLTHIORIBOSE KINASE"/>
    <property type="match status" value="1"/>
</dbReference>
<dbReference type="Pfam" id="PF01636">
    <property type="entry name" value="APH"/>
    <property type="match status" value="1"/>
</dbReference>
<dbReference type="PIRSF" id="PIRSF031134">
    <property type="entry name" value="MTRK"/>
    <property type="match status" value="1"/>
</dbReference>
<dbReference type="SUPFAM" id="SSF56112">
    <property type="entry name" value="Protein kinase-like (PK-like)"/>
    <property type="match status" value="1"/>
</dbReference>
<accession>O31663</accession>
<feature type="chain" id="PRO_0000162915" description="Methylthioribose kinase">
    <location>
        <begin position="1"/>
        <end position="397"/>
    </location>
</feature>
<feature type="binding site" evidence="2 3">
    <location>
        <position position="44"/>
    </location>
    <ligand>
        <name>ATP</name>
        <dbReference type="ChEBI" id="CHEBI:30616"/>
    </ligand>
</feature>
<feature type="binding site" evidence="2 3">
    <location>
        <position position="61"/>
    </location>
    <ligand>
        <name>ATP</name>
        <dbReference type="ChEBI" id="CHEBI:30616"/>
    </ligand>
</feature>
<feature type="binding site" evidence="2 3">
    <location>
        <begin position="115"/>
        <end position="117"/>
    </location>
    <ligand>
        <name>ATP</name>
        <dbReference type="ChEBI" id="CHEBI:30616"/>
    </ligand>
</feature>
<feature type="binding site" evidence="3">
    <location>
        <position position="233"/>
    </location>
    <ligand>
        <name>substrate</name>
    </ligand>
</feature>
<feature type="binding site" evidence="2 3">
    <location>
        <begin position="250"/>
        <end position="252"/>
    </location>
    <ligand>
        <name>ATP</name>
        <dbReference type="ChEBI" id="CHEBI:30616"/>
    </ligand>
</feature>
<feature type="binding site" evidence="3">
    <location>
        <position position="340"/>
    </location>
    <ligand>
        <name>substrate</name>
    </ligand>
</feature>
<feature type="helix" evidence="7">
    <location>
        <begin position="14"/>
        <end position="23"/>
    </location>
</feature>
<feature type="strand" evidence="7">
    <location>
        <begin position="34"/>
        <end position="37"/>
    </location>
</feature>
<feature type="strand" evidence="7">
    <location>
        <begin position="40"/>
        <end position="50"/>
    </location>
</feature>
<feature type="strand" evidence="8">
    <location>
        <begin position="52"/>
        <end position="55"/>
    </location>
</feature>
<feature type="strand" evidence="7">
    <location>
        <begin position="57"/>
        <end position="63"/>
    </location>
</feature>
<feature type="helix" evidence="9">
    <location>
        <begin position="66"/>
        <end position="68"/>
    </location>
</feature>
<feature type="helix" evidence="7">
    <location>
        <begin position="80"/>
        <end position="92"/>
    </location>
</feature>
<feature type="helix" evidence="7">
    <location>
        <begin position="96"/>
        <end position="98"/>
    </location>
</feature>
<feature type="strand" evidence="7">
    <location>
        <begin position="102"/>
        <end position="106"/>
    </location>
</feature>
<feature type="turn" evidence="7">
    <location>
        <begin position="107"/>
        <end position="110"/>
    </location>
</feature>
<feature type="strand" evidence="7">
    <location>
        <begin position="111"/>
        <end position="114"/>
    </location>
</feature>
<feature type="strand" evidence="7">
    <location>
        <begin position="120"/>
        <end position="122"/>
    </location>
</feature>
<feature type="helix" evidence="7">
    <location>
        <begin position="123"/>
        <end position="128"/>
    </location>
</feature>
<feature type="helix" evidence="7">
    <location>
        <begin position="136"/>
        <end position="150"/>
    </location>
</feature>
<feature type="turn" evidence="7">
    <location>
        <begin position="153"/>
        <end position="155"/>
    </location>
</feature>
<feature type="helix" evidence="7">
    <location>
        <begin position="158"/>
        <end position="167"/>
    </location>
</feature>
<feature type="helix" evidence="7">
    <location>
        <begin position="171"/>
        <end position="180"/>
    </location>
</feature>
<feature type="turn" evidence="7">
    <location>
        <begin position="181"/>
        <end position="183"/>
    </location>
</feature>
<feature type="helix" evidence="7">
    <location>
        <begin position="184"/>
        <end position="186"/>
    </location>
</feature>
<feature type="helix" evidence="7">
    <location>
        <begin position="196"/>
        <end position="198"/>
    </location>
</feature>
<feature type="helix" evidence="7">
    <location>
        <begin position="199"/>
        <end position="206"/>
    </location>
</feature>
<feature type="helix" evidence="7">
    <location>
        <begin position="209"/>
        <end position="224"/>
    </location>
</feature>
<feature type="strand" evidence="7">
    <location>
        <begin position="228"/>
        <end position="230"/>
    </location>
</feature>
<feature type="helix" evidence="7">
    <location>
        <begin position="236"/>
        <end position="238"/>
    </location>
</feature>
<feature type="strand" evidence="7">
    <location>
        <begin position="239"/>
        <end position="241"/>
    </location>
</feature>
<feature type="strand" evidence="7">
    <location>
        <begin position="246"/>
        <end position="248"/>
    </location>
</feature>
<feature type="strand" evidence="7">
    <location>
        <begin position="255"/>
        <end position="257"/>
    </location>
</feature>
<feature type="helix" evidence="7">
    <location>
        <begin position="260"/>
        <end position="276"/>
    </location>
</feature>
<feature type="helix" evidence="7">
    <location>
        <begin position="279"/>
        <end position="282"/>
    </location>
</feature>
<feature type="helix" evidence="7">
    <location>
        <begin position="283"/>
        <end position="307"/>
    </location>
</feature>
<feature type="turn" evidence="7">
    <location>
        <begin position="311"/>
        <end position="314"/>
    </location>
</feature>
<feature type="helix" evidence="7">
    <location>
        <begin position="318"/>
        <end position="343"/>
    </location>
</feature>
<feature type="strand" evidence="7">
    <location>
        <begin position="344"/>
        <end position="346"/>
    </location>
</feature>
<feature type="helix" evidence="7">
    <location>
        <begin position="349"/>
        <end position="352"/>
    </location>
</feature>
<feature type="helix" evidence="7">
    <location>
        <begin position="357"/>
        <end position="377"/>
    </location>
</feature>
<feature type="turn" evidence="7">
    <location>
        <begin position="378"/>
        <end position="380"/>
    </location>
</feature>
<feature type="helix" evidence="7">
    <location>
        <begin position="384"/>
        <end position="394"/>
    </location>
</feature>
<organism>
    <name type="scientific">Bacillus subtilis (strain 168)</name>
    <dbReference type="NCBI Taxonomy" id="224308"/>
    <lineage>
        <taxon>Bacteria</taxon>
        <taxon>Bacillati</taxon>
        <taxon>Bacillota</taxon>
        <taxon>Bacilli</taxon>
        <taxon>Bacillales</taxon>
        <taxon>Bacillaceae</taxon>
        <taxon>Bacillus</taxon>
    </lineage>
</organism>
<evidence type="ECO:0000269" key="1">
    <source>
    </source>
</evidence>
<evidence type="ECO:0000269" key="2">
    <source>
    </source>
</evidence>
<evidence type="ECO:0000269" key="3">
    <source>
    </source>
</evidence>
<evidence type="ECO:0000303" key="4">
    <source>
    </source>
</evidence>
<evidence type="ECO:0000305" key="5"/>
<evidence type="ECO:0000305" key="6">
    <source>
    </source>
</evidence>
<evidence type="ECO:0007829" key="7">
    <source>
        <dbReference type="PDB" id="2OLC"/>
    </source>
</evidence>
<evidence type="ECO:0007829" key="8">
    <source>
        <dbReference type="PDB" id="2PU8"/>
    </source>
</evidence>
<evidence type="ECO:0007829" key="9">
    <source>
        <dbReference type="PDB" id="2PUL"/>
    </source>
</evidence>